<accession>A5EPH1</accession>
<protein>
    <recommendedName>
        <fullName evidence="1">UPF0391 membrane protein BBta_6140</fullName>
    </recommendedName>
</protein>
<evidence type="ECO:0000255" key="1">
    <source>
        <dbReference type="HAMAP-Rule" id="MF_01361"/>
    </source>
</evidence>
<reference key="1">
    <citation type="journal article" date="2007" name="Science">
        <title>Legumes symbioses: absence of nod genes in photosynthetic bradyrhizobia.</title>
        <authorList>
            <person name="Giraud E."/>
            <person name="Moulin L."/>
            <person name="Vallenet D."/>
            <person name="Barbe V."/>
            <person name="Cytryn E."/>
            <person name="Avarre J.-C."/>
            <person name="Jaubert M."/>
            <person name="Simon D."/>
            <person name="Cartieaux F."/>
            <person name="Prin Y."/>
            <person name="Bena G."/>
            <person name="Hannibal L."/>
            <person name="Fardoux J."/>
            <person name="Kojadinovic M."/>
            <person name="Vuillet L."/>
            <person name="Lajus A."/>
            <person name="Cruveiller S."/>
            <person name="Rouy Z."/>
            <person name="Mangenot S."/>
            <person name="Segurens B."/>
            <person name="Dossat C."/>
            <person name="Franck W.L."/>
            <person name="Chang W.-S."/>
            <person name="Saunders E."/>
            <person name="Bruce D."/>
            <person name="Richardson P."/>
            <person name="Normand P."/>
            <person name="Dreyfus B."/>
            <person name="Pignol D."/>
            <person name="Stacey G."/>
            <person name="Emerich D."/>
            <person name="Vermeglio A."/>
            <person name="Medigue C."/>
            <person name="Sadowsky M."/>
        </authorList>
    </citation>
    <scope>NUCLEOTIDE SEQUENCE [LARGE SCALE GENOMIC DNA]</scope>
    <source>
        <strain>BTAi1 / ATCC BAA-1182</strain>
    </source>
</reference>
<feature type="chain" id="PRO_0000298590" description="UPF0391 membrane protein BBta_6140">
    <location>
        <begin position="1"/>
        <end position="57"/>
    </location>
</feature>
<feature type="transmembrane region" description="Helical" evidence="1">
    <location>
        <begin position="1"/>
        <end position="21"/>
    </location>
</feature>
<feature type="transmembrane region" description="Helical" evidence="1">
    <location>
        <begin position="30"/>
        <end position="50"/>
    </location>
</feature>
<gene>
    <name type="ordered locus">BBta_6140</name>
</gene>
<name>Y6140_BRASB</name>
<organism>
    <name type="scientific">Bradyrhizobium sp. (strain BTAi1 / ATCC BAA-1182)</name>
    <dbReference type="NCBI Taxonomy" id="288000"/>
    <lineage>
        <taxon>Bacteria</taxon>
        <taxon>Pseudomonadati</taxon>
        <taxon>Pseudomonadota</taxon>
        <taxon>Alphaproteobacteria</taxon>
        <taxon>Hyphomicrobiales</taxon>
        <taxon>Nitrobacteraceae</taxon>
        <taxon>Bradyrhizobium</taxon>
    </lineage>
</organism>
<comment type="subcellular location">
    <subcellularLocation>
        <location evidence="1">Cell membrane</location>
        <topology evidence="1">Multi-pass membrane protein</topology>
    </subcellularLocation>
</comment>
<comment type="similarity">
    <text evidence="1">Belongs to the UPF0391 family.</text>
</comment>
<proteinExistence type="inferred from homology"/>
<keyword id="KW-1003">Cell membrane</keyword>
<keyword id="KW-0472">Membrane</keyword>
<keyword id="KW-1185">Reference proteome</keyword>
<keyword id="KW-0812">Transmembrane</keyword>
<keyword id="KW-1133">Transmembrane helix</keyword>
<sequence>MLGWVVTFLVIALIAGILGFGGVAGASIEIAKIIFFIAIVLFLVSAVVGLARGRTRV</sequence>
<dbReference type="EMBL" id="CP000494">
    <property type="protein sequence ID" value="ABQ38065.1"/>
    <property type="molecule type" value="Genomic_DNA"/>
</dbReference>
<dbReference type="RefSeq" id="WP_008964634.1">
    <property type="nucleotide sequence ID" value="NC_009485.1"/>
</dbReference>
<dbReference type="STRING" id="288000.BBta_6140"/>
<dbReference type="KEGG" id="bbt:BBta_6140"/>
<dbReference type="eggNOG" id="COG5487">
    <property type="taxonomic scope" value="Bacteria"/>
</dbReference>
<dbReference type="HOGENOM" id="CLU_187346_2_1_5"/>
<dbReference type="Proteomes" id="UP000000246">
    <property type="component" value="Chromosome"/>
</dbReference>
<dbReference type="GO" id="GO:0005886">
    <property type="term" value="C:plasma membrane"/>
    <property type="evidence" value="ECO:0007669"/>
    <property type="project" value="UniProtKB-SubCell"/>
</dbReference>
<dbReference type="HAMAP" id="MF_01361">
    <property type="entry name" value="UPF0391"/>
    <property type="match status" value="1"/>
</dbReference>
<dbReference type="InterPro" id="IPR009760">
    <property type="entry name" value="DUF1328"/>
</dbReference>
<dbReference type="NCBIfam" id="NF010228">
    <property type="entry name" value="PRK13682.1-3"/>
    <property type="match status" value="1"/>
</dbReference>
<dbReference type="NCBIfam" id="NF010229">
    <property type="entry name" value="PRK13682.1-4"/>
    <property type="match status" value="1"/>
</dbReference>
<dbReference type="Pfam" id="PF07043">
    <property type="entry name" value="DUF1328"/>
    <property type="match status" value="1"/>
</dbReference>
<dbReference type="PIRSF" id="PIRSF036466">
    <property type="entry name" value="UCP036466"/>
    <property type="match status" value="1"/>
</dbReference>